<name>SECB_BRASB</name>
<comment type="function">
    <text evidence="1">One of the proteins required for the normal export of preproteins out of the cell cytoplasm. It is a molecular chaperone that binds to a subset of precursor proteins, maintaining them in a translocation-competent state. It also specifically binds to its receptor SecA.</text>
</comment>
<comment type="subunit">
    <text evidence="1">Homotetramer, a dimer of dimers. One homotetramer interacts with 1 SecA dimer.</text>
</comment>
<comment type="subcellular location">
    <subcellularLocation>
        <location evidence="1">Cytoplasm</location>
    </subcellularLocation>
</comment>
<comment type="similarity">
    <text evidence="1">Belongs to the SecB family.</text>
</comment>
<proteinExistence type="inferred from homology"/>
<gene>
    <name evidence="1" type="primary">secB</name>
    <name type="ordered locus">BBta_0157</name>
</gene>
<feature type="chain" id="PRO_1000062454" description="Protein-export protein SecB">
    <location>
        <begin position="1"/>
        <end position="162"/>
    </location>
</feature>
<protein>
    <recommendedName>
        <fullName evidence="1">Protein-export protein SecB</fullName>
    </recommendedName>
</protein>
<reference key="1">
    <citation type="journal article" date="2007" name="Science">
        <title>Legumes symbioses: absence of nod genes in photosynthetic bradyrhizobia.</title>
        <authorList>
            <person name="Giraud E."/>
            <person name="Moulin L."/>
            <person name="Vallenet D."/>
            <person name="Barbe V."/>
            <person name="Cytryn E."/>
            <person name="Avarre J.-C."/>
            <person name="Jaubert M."/>
            <person name="Simon D."/>
            <person name="Cartieaux F."/>
            <person name="Prin Y."/>
            <person name="Bena G."/>
            <person name="Hannibal L."/>
            <person name="Fardoux J."/>
            <person name="Kojadinovic M."/>
            <person name="Vuillet L."/>
            <person name="Lajus A."/>
            <person name="Cruveiller S."/>
            <person name="Rouy Z."/>
            <person name="Mangenot S."/>
            <person name="Segurens B."/>
            <person name="Dossat C."/>
            <person name="Franck W.L."/>
            <person name="Chang W.-S."/>
            <person name="Saunders E."/>
            <person name="Bruce D."/>
            <person name="Richardson P."/>
            <person name="Normand P."/>
            <person name="Dreyfus B."/>
            <person name="Pignol D."/>
            <person name="Stacey G."/>
            <person name="Emerich D."/>
            <person name="Vermeglio A."/>
            <person name="Medigue C."/>
            <person name="Sadowsky M."/>
        </authorList>
    </citation>
    <scope>NUCLEOTIDE SEQUENCE [LARGE SCALE GENOMIC DNA]</scope>
    <source>
        <strain>BTAi1 / ATCC BAA-1182</strain>
    </source>
</reference>
<organism>
    <name type="scientific">Bradyrhizobium sp. (strain BTAi1 / ATCC BAA-1182)</name>
    <dbReference type="NCBI Taxonomy" id="288000"/>
    <lineage>
        <taxon>Bacteria</taxon>
        <taxon>Pseudomonadati</taxon>
        <taxon>Pseudomonadota</taxon>
        <taxon>Alphaproteobacteria</taxon>
        <taxon>Hyphomicrobiales</taxon>
        <taxon>Nitrobacteraceae</taxon>
        <taxon>Bradyrhizobium</taxon>
    </lineage>
</organism>
<dbReference type="EMBL" id="CP000494">
    <property type="protein sequence ID" value="ABQ32454.1"/>
    <property type="molecule type" value="Genomic_DNA"/>
</dbReference>
<dbReference type="RefSeq" id="WP_011942676.1">
    <property type="nucleotide sequence ID" value="NC_009485.1"/>
</dbReference>
<dbReference type="SMR" id="A5E8G0"/>
<dbReference type="STRING" id="288000.BBta_0157"/>
<dbReference type="KEGG" id="bbt:BBta_0157"/>
<dbReference type="eggNOG" id="COG1952">
    <property type="taxonomic scope" value="Bacteria"/>
</dbReference>
<dbReference type="HOGENOM" id="CLU_111574_0_0_5"/>
<dbReference type="OrthoDB" id="9795145at2"/>
<dbReference type="Proteomes" id="UP000000246">
    <property type="component" value="Chromosome"/>
</dbReference>
<dbReference type="GO" id="GO:0005737">
    <property type="term" value="C:cytoplasm"/>
    <property type="evidence" value="ECO:0007669"/>
    <property type="project" value="UniProtKB-SubCell"/>
</dbReference>
<dbReference type="GO" id="GO:0051082">
    <property type="term" value="F:unfolded protein binding"/>
    <property type="evidence" value="ECO:0007669"/>
    <property type="project" value="InterPro"/>
</dbReference>
<dbReference type="GO" id="GO:0006457">
    <property type="term" value="P:protein folding"/>
    <property type="evidence" value="ECO:0007669"/>
    <property type="project" value="UniProtKB-UniRule"/>
</dbReference>
<dbReference type="GO" id="GO:0051262">
    <property type="term" value="P:protein tetramerization"/>
    <property type="evidence" value="ECO:0007669"/>
    <property type="project" value="InterPro"/>
</dbReference>
<dbReference type="GO" id="GO:0015031">
    <property type="term" value="P:protein transport"/>
    <property type="evidence" value="ECO:0007669"/>
    <property type="project" value="UniProtKB-UniRule"/>
</dbReference>
<dbReference type="Gene3D" id="3.10.420.10">
    <property type="entry name" value="SecB-like"/>
    <property type="match status" value="1"/>
</dbReference>
<dbReference type="HAMAP" id="MF_00821">
    <property type="entry name" value="SecB"/>
    <property type="match status" value="1"/>
</dbReference>
<dbReference type="InterPro" id="IPR003708">
    <property type="entry name" value="SecB"/>
</dbReference>
<dbReference type="InterPro" id="IPR035958">
    <property type="entry name" value="SecB-like_sf"/>
</dbReference>
<dbReference type="NCBIfam" id="NF004392">
    <property type="entry name" value="PRK05751.1-3"/>
    <property type="match status" value="1"/>
</dbReference>
<dbReference type="NCBIfam" id="TIGR00809">
    <property type="entry name" value="secB"/>
    <property type="match status" value="1"/>
</dbReference>
<dbReference type="PANTHER" id="PTHR36918">
    <property type="match status" value="1"/>
</dbReference>
<dbReference type="PANTHER" id="PTHR36918:SF1">
    <property type="entry name" value="PROTEIN-EXPORT PROTEIN SECB"/>
    <property type="match status" value="1"/>
</dbReference>
<dbReference type="Pfam" id="PF02556">
    <property type="entry name" value="SecB"/>
    <property type="match status" value="1"/>
</dbReference>
<dbReference type="PRINTS" id="PR01594">
    <property type="entry name" value="SECBCHAPRONE"/>
</dbReference>
<dbReference type="SUPFAM" id="SSF54611">
    <property type="entry name" value="SecB-like"/>
    <property type="match status" value="1"/>
</dbReference>
<sequence>MTNGNGANPEAAPPPQLNVLAQYIKDLSFENPNAPQSLAPQGQPPQINIQINVGANALADTEFEVTLTIEGKAESGTQVMFSFELVYGGVFRLVNVPQEHLSPMLLIECPRLLFPFAREIVANSVRDGGFPPLMLDPVDFVSLYRQNMERQAAAQGAQIRPS</sequence>
<keyword id="KW-0143">Chaperone</keyword>
<keyword id="KW-0963">Cytoplasm</keyword>
<keyword id="KW-0653">Protein transport</keyword>
<keyword id="KW-1185">Reference proteome</keyword>
<keyword id="KW-0811">Translocation</keyword>
<keyword id="KW-0813">Transport</keyword>
<accession>A5E8G0</accession>
<evidence type="ECO:0000255" key="1">
    <source>
        <dbReference type="HAMAP-Rule" id="MF_00821"/>
    </source>
</evidence>